<proteinExistence type="inferred from homology"/>
<name>KCY_PSEPK</name>
<gene>
    <name evidence="1" type="primary">cmk</name>
    <name type="ordered locus">PP_1771</name>
</gene>
<accession>Q88M04</accession>
<comment type="catalytic activity">
    <reaction evidence="1">
        <text>CMP + ATP = CDP + ADP</text>
        <dbReference type="Rhea" id="RHEA:11600"/>
        <dbReference type="ChEBI" id="CHEBI:30616"/>
        <dbReference type="ChEBI" id="CHEBI:58069"/>
        <dbReference type="ChEBI" id="CHEBI:60377"/>
        <dbReference type="ChEBI" id="CHEBI:456216"/>
        <dbReference type="EC" id="2.7.4.25"/>
    </reaction>
</comment>
<comment type="catalytic activity">
    <reaction evidence="1">
        <text>dCMP + ATP = dCDP + ADP</text>
        <dbReference type="Rhea" id="RHEA:25094"/>
        <dbReference type="ChEBI" id="CHEBI:30616"/>
        <dbReference type="ChEBI" id="CHEBI:57566"/>
        <dbReference type="ChEBI" id="CHEBI:58593"/>
        <dbReference type="ChEBI" id="CHEBI:456216"/>
        <dbReference type="EC" id="2.7.4.25"/>
    </reaction>
</comment>
<comment type="subcellular location">
    <subcellularLocation>
        <location evidence="1">Cytoplasm</location>
    </subcellularLocation>
</comment>
<comment type="similarity">
    <text evidence="1">Belongs to the cytidylate kinase family. Type 1 subfamily.</text>
</comment>
<feature type="chain" id="PRO_0000131957" description="Cytidylate kinase">
    <location>
        <begin position="1"/>
        <end position="228"/>
    </location>
</feature>
<feature type="binding site" evidence="1">
    <location>
        <begin position="12"/>
        <end position="20"/>
    </location>
    <ligand>
        <name>ATP</name>
        <dbReference type="ChEBI" id="CHEBI:30616"/>
    </ligand>
</feature>
<keyword id="KW-0067">ATP-binding</keyword>
<keyword id="KW-0963">Cytoplasm</keyword>
<keyword id="KW-0418">Kinase</keyword>
<keyword id="KW-0547">Nucleotide-binding</keyword>
<keyword id="KW-1185">Reference proteome</keyword>
<keyword id="KW-0808">Transferase</keyword>
<organism>
    <name type="scientific">Pseudomonas putida (strain ATCC 47054 / DSM 6125 / CFBP 8728 / NCIMB 11950 / KT2440)</name>
    <dbReference type="NCBI Taxonomy" id="160488"/>
    <lineage>
        <taxon>Bacteria</taxon>
        <taxon>Pseudomonadati</taxon>
        <taxon>Pseudomonadota</taxon>
        <taxon>Gammaproteobacteria</taxon>
        <taxon>Pseudomonadales</taxon>
        <taxon>Pseudomonadaceae</taxon>
        <taxon>Pseudomonas</taxon>
    </lineage>
</organism>
<evidence type="ECO:0000255" key="1">
    <source>
        <dbReference type="HAMAP-Rule" id="MF_00238"/>
    </source>
</evidence>
<reference key="1">
    <citation type="journal article" date="2002" name="Environ. Microbiol.">
        <title>Complete genome sequence and comparative analysis of the metabolically versatile Pseudomonas putida KT2440.</title>
        <authorList>
            <person name="Nelson K.E."/>
            <person name="Weinel C."/>
            <person name="Paulsen I.T."/>
            <person name="Dodson R.J."/>
            <person name="Hilbert H."/>
            <person name="Martins dos Santos V.A.P."/>
            <person name="Fouts D.E."/>
            <person name="Gill S.R."/>
            <person name="Pop M."/>
            <person name="Holmes M."/>
            <person name="Brinkac L.M."/>
            <person name="Beanan M.J."/>
            <person name="DeBoy R.T."/>
            <person name="Daugherty S.C."/>
            <person name="Kolonay J.F."/>
            <person name="Madupu R."/>
            <person name="Nelson W.C."/>
            <person name="White O."/>
            <person name="Peterson J.D."/>
            <person name="Khouri H.M."/>
            <person name="Hance I."/>
            <person name="Chris Lee P."/>
            <person name="Holtzapple E.K."/>
            <person name="Scanlan D."/>
            <person name="Tran K."/>
            <person name="Moazzez A."/>
            <person name="Utterback T.R."/>
            <person name="Rizzo M."/>
            <person name="Lee K."/>
            <person name="Kosack D."/>
            <person name="Moestl D."/>
            <person name="Wedler H."/>
            <person name="Lauber J."/>
            <person name="Stjepandic D."/>
            <person name="Hoheisel J."/>
            <person name="Straetz M."/>
            <person name="Heim S."/>
            <person name="Kiewitz C."/>
            <person name="Eisen J.A."/>
            <person name="Timmis K.N."/>
            <person name="Duesterhoeft A."/>
            <person name="Tuemmler B."/>
            <person name="Fraser C.M."/>
        </authorList>
    </citation>
    <scope>NUCLEOTIDE SEQUENCE [LARGE SCALE GENOMIC DNA]</scope>
    <source>
        <strain>ATCC 47054 / DSM 6125 / CFBP 8728 / NCIMB 11950 / KT2440</strain>
    </source>
</reference>
<sequence>MNSMAPVITIDGPSGSGKGTVAGLIARELGWKLLDSGALYRLLAFNASNHGVDLTNEELLTKLAAHLDVQFIAAEPGKLQQIILEGEDVSNVIRTETVGAGASMVASLPAVRDALLVRQREFREVPGLIADGRDMGTVVFPDAPLKVFLTASAEERARRRYLQLKGKGEDVSLSSLLDEIRARDERDTQRAVAPLKPAADAIQLDSTELSIEQVLQRIRSEIAQRDLI</sequence>
<protein>
    <recommendedName>
        <fullName evidence="1">Cytidylate kinase</fullName>
        <shortName evidence="1">CK</shortName>
        <ecNumber evidence="1">2.7.4.25</ecNumber>
    </recommendedName>
    <alternativeName>
        <fullName evidence="1">Cytidine monophosphate kinase</fullName>
        <shortName evidence="1">CMP kinase</shortName>
    </alternativeName>
</protein>
<dbReference type="EC" id="2.7.4.25" evidence="1"/>
<dbReference type="EMBL" id="AE015451">
    <property type="protein sequence ID" value="AAN67391.1"/>
    <property type="molecule type" value="Genomic_DNA"/>
</dbReference>
<dbReference type="RefSeq" id="NP_743927.1">
    <property type="nucleotide sequence ID" value="NC_002947.4"/>
</dbReference>
<dbReference type="RefSeq" id="WP_010952809.1">
    <property type="nucleotide sequence ID" value="NC_002947.4"/>
</dbReference>
<dbReference type="SMR" id="Q88M04"/>
<dbReference type="STRING" id="160488.PP_1771"/>
<dbReference type="PaxDb" id="160488-PP_1771"/>
<dbReference type="GeneID" id="83681695"/>
<dbReference type="KEGG" id="ppu:PP_1771"/>
<dbReference type="PATRIC" id="fig|160488.4.peg.1867"/>
<dbReference type="eggNOG" id="COG0283">
    <property type="taxonomic scope" value="Bacteria"/>
</dbReference>
<dbReference type="HOGENOM" id="CLU_079959_0_2_6"/>
<dbReference type="OrthoDB" id="9807434at2"/>
<dbReference type="PhylomeDB" id="Q88M04"/>
<dbReference type="BioCyc" id="PPUT160488:G1G01-1873-MONOMER"/>
<dbReference type="Proteomes" id="UP000000556">
    <property type="component" value="Chromosome"/>
</dbReference>
<dbReference type="GO" id="GO:0005829">
    <property type="term" value="C:cytosol"/>
    <property type="evidence" value="ECO:0007669"/>
    <property type="project" value="TreeGrafter"/>
</dbReference>
<dbReference type="GO" id="GO:0005524">
    <property type="term" value="F:ATP binding"/>
    <property type="evidence" value="ECO:0007669"/>
    <property type="project" value="UniProtKB-UniRule"/>
</dbReference>
<dbReference type="GO" id="GO:0036430">
    <property type="term" value="F:CMP kinase activity"/>
    <property type="evidence" value="ECO:0007669"/>
    <property type="project" value="RHEA"/>
</dbReference>
<dbReference type="GO" id="GO:0036431">
    <property type="term" value="F:dCMP kinase activity"/>
    <property type="evidence" value="ECO:0007669"/>
    <property type="project" value="RHEA"/>
</dbReference>
<dbReference type="GO" id="GO:0015949">
    <property type="term" value="P:nucleobase-containing small molecule interconversion"/>
    <property type="evidence" value="ECO:0007669"/>
    <property type="project" value="TreeGrafter"/>
</dbReference>
<dbReference type="GO" id="GO:0006220">
    <property type="term" value="P:pyrimidine nucleotide metabolic process"/>
    <property type="evidence" value="ECO:0007669"/>
    <property type="project" value="UniProtKB-UniRule"/>
</dbReference>
<dbReference type="CDD" id="cd02020">
    <property type="entry name" value="CMPK"/>
    <property type="match status" value="1"/>
</dbReference>
<dbReference type="FunFam" id="3.40.50.300:FF:000262">
    <property type="entry name" value="Cytidylate kinase"/>
    <property type="match status" value="1"/>
</dbReference>
<dbReference type="Gene3D" id="3.40.50.300">
    <property type="entry name" value="P-loop containing nucleotide triphosphate hydrolases"/>
    <property type="match status" value="1"/>
</dbReference>
<dbReference type="HAMAP" id="MF_00238">
    <property type="entry name" value="Cytidyl_kinase_type1"/>
    <property type="match status" value="1"/>
</dbReference>
<dbReference type="InterPro" id="IPR003136">
    <property type="entry name" value="Cytidylate_kin"/>
</dbReference>
<dbReference type="InterPro" id="IPR011994">
    <property type="entry name" value="Cytidylate_kinase_dom"/>
</dbReference>
<dbReference type="InterPro" id="IPR027417">
    <property type="entry name" value="P-loop_NTPase"/>
</dbReference>
<dbReference type="NCBIfam" id="TIGR00017">
    <property type="entry name" value="cmk"/>
    <property type="match status" value="1"/>
</dbReference>
<dbReference type="PANTHER" id="PTHR21299:SF2">
    <property type="entry name" value="CYTIDYLATE KINASE"/>
    <property type="match status" value="1"/>
</dbReference>
<dbReference type="PANTHER" id="PTHR21299">
    <property type="entry name" value="CYTIDYLATE KINASE/PANTOATE-BETA-ALANINE LIGASE"/>
    <property type="match status" value="1"/>
</dbReference>
<dbReference type="Pfam" id="PF02224">
    <property type="entry name" value="Cytidylate_kin"/>
    <property type="match status" value="1"/>
</dbReference>
<dbReference type="SUPFAM" id="SSF52540">
    <property type="entry name" value="P-loop containing nucleoside triphosphate hydrolases"/>
    <property type="match status" value="1"/>
</dbReference>